<proteinExistence type="inferred from homology"/>
<reference key="1">
    <citation type="journal article" date="2007" name="PLoS Genet.">
        <title>Meningococcal genetic variation mechanisms viewed through comparative analysis of serogroup C strain FAM18.</title>
        <authorList>
            <person name="Bentley S.D."/>
            <person name="Vernikos G.S."/>
            <person name="Snyder L.A.S."/>
            <person name="Churcher C."/>
            <person name="Arrowsmith C."/>
            <person name="Chillingworth T."/>
            <person name="Cronin A."/>
            <person name="Davis P.H."/>
            <person name="Holroyd N.E."/>
            <person name="Jagels K."/>
            <person name="Maddison M."/>
            <person name="Moule S."/>
            <person name="Rabbinowitsch E."/>
            <person name="Sharp S."/>
            <person name="Unwin L."/>
            <person name="Whitehead S."/>
            <person name="Quail M.A."/>
            <person name="Achtman M."/>
            <person name="Barrell B.G."/>
            <person name="Saunders N.J."/>
            <person name="Parkhill J."/>
        </authorList>
    </citation>
    <scope>NUCLEOTIDE SEQUENCE [LARGE SCALE GENOMIC DNA]</scope>
    <source>
        <strain>ATCC 700532 / DSM 15464 / FAM18</strain>
    </source>
</reference>
<organism>
    <name type="scientific">Neisseria meningitidis serogroup C / serotype 2a (strain ATCC 700532 / DSM 15464 / FAM18)</name>
    <dbReference type="NCBI Taxonomy" id="272831"/>
    <lineage>
        <taxon>Bacteria</taxon>
        <taxon>Pseudomonadati</taxon>
        <taxon>Pseudomonadota</taxon>
        <taxon>Betaproteobacteria</taxon>
        <taxon>Neisseriales</taxon>
        <taxon>Neisseriaceae</taxon>
        <taxon>Neisseria</taxon>
    </lineage>
</organism>
<evidence type="ECO:0000255" key="1">
    <source>
        <dbReference type="HAMAP-Rule" id="MF_00048"/>
    </source>
</evidence>
<name>Y2069_NEIMF</name>
<protein>
    <recommendedName>
        <fullName evidence="1">UPF0102 protein NMC2069</fullName>
    </recommendedName>
</protein>
<accession>A1KWG5</accession>
<dbReference type="EMBL" id="AM421808">
    <property type="protein sequence ID" value="CAM11222.1"/>
    <property type="molecule type" value="Genomic_DNA"/>
</dbReference>
<dbReference type="RefSeq" id="WP_002215062.1">
    <property type="nucleotide sequence ID" value="NC_008767.1"/>
</dbReference>
<dbReference type="SMR" id="A1KWG5"/>
<dbReference type="KEGG" id="nmc:NMC2069"/>
<dbReference type="HOGENOM" id="CLU_115353_1_1_4"/>
<dbReference type="Proteomes" id="UP000002286">
    <property type="component" value="Chromosome"/>
</dbReference>
<dbReference type="GO" id="GO:0003676">
    <property type="term" value="F:nucleic acid binding"/>
    <property type="evidence" value="ECO:0007669"/>
    <property type="project" value="InterPro"/>
</dbReference>
<dbReference type="Gene3D" id="3.40.1350.10">
    <property type="match status" value="1"/>
</dbReference>
<dbReference type="HAMAP" id="MF_00048">
    <property type="entry name" value="UPF0102"/>
    <property type="match status" value="1"/>
</dbReference>
<dbReference type="InterPro" id="IPR011335">
    <property type="entry name" value="Restrct_endonuc-II-like"/>
</dbReference>
<dbReference type="InterPro" id="IPR011856">
    <property type="entry name" value="tRNA_endonuc-like_dom_sf"/>
</dbReference>
<dbReference type="InterPro" id="IPR003509">
    <property type="entry name" value="UPF0102_YraN-like"/>
</dbReference>
<dbReference type="NCBIfam" id="NF009150">
    <property type="entry name" value="PRK12497.1-3"/>
    <property type="match status" value="1"/>
</dbReference>
<dbReference type="NCBIfam" id="TIGR00252">
    <property type="entry name" value="YraN family protein"/>
    <property type="match status" value="1"/>
</dbReference>
<dbReference type="PANTHER" id="PTHR34039">
    <property type="entry name" value="UPF0102 PROTEIN YRAN"/>
    <property type="match status" value="1"/>
</dbReference>
<dbReference type="PANTHER" id="PTHR34039:SF1">
    <property type="entry name" value="UPF0102 PROTEIN YRAN"/>
    <property type="match status" value="1"/>
</dbReference>
<dbReference type="Pfam" id="PF02021">
    <property type="entry name" value="UPF0102"/>
    <property type="match status" value="1"/>
</dbReference>
<dbReference type="SUPFAM" id="SSF52980">
    <property type="entry name" value="Restriction endonuclease-like"/>
    <property type="match status" value="1"/>
</dbReference>
<gene>
    <name type="ordered locus">NMC2069</name>
</gene>
<feature type="chain" id="PRO_1000009237" description="UPF0102 protein NMC2069">
    <location>
        <begin position="1"/>
        <end position="115"/>
    </location>
</feature>
<comment type="similarity">
    <text evidence="1">Belongs to the UPF0102 family.</text>
</comment>
<sequence>MRLNHKQGEAGEDAALAFLQSQGCTLLARNWHCAYGEIDLIVKNGGMILFVEVKYRKNRQFGGAAYSISPSKLLKLQRSVEYYLQQNRLTNVPCRLDAVLIEGSRPPEWIQNITG</sequence>